<feature type="chain" id="PRO_1000025100" description="UDP-2,3-diacylglucosamine hydrolase">
    <location>
        <begin position="1"/>
        <end position="240"/>
    </location>
</feature>
<feature type="binding site" evidence="1">
    <location>
        <position position="8"/>
    </location>
    <ligand>
        <name>Mn(2+)</name>
        <dbReference type="ChEBI" id="CHEBI:29035"/>
        <label>1</label>
    </ligand>
</feature>
<feature type="binding site" evidence="1">
    <location>
        <position position="10"/>
    </location>
    <ligand>
        <name>Mn(2+)</name>
        <dbReference type="ChEBI" id="CHEBI:29035"/>
        <label>1</label>
    </ligand>
</feature>
<feature type="binding site" evidence="1">
    <location>
        <position position="41"/>
    </location>
    <ligand>
        <name>Mn(2+)</name>
        <dbReference type="ChEBI" id="CHEBI:29035"/>
        <label>1</label>
    </ligand>
</feature>
<feature type="binding site" evidence="1">
    <location>
        <position position="41"/>
    </location>
    <ligand>
        <name>Mn(2+)</name>
        <dbReference type="ChEBI" id="CHEBI:29035"/>
        <label>2</label>
    </ligand>
</feature>
<feature type="binding site" evidence="1">
    <location>
        <begin position="79"/>
        <end position="80"/>
    </location>
    <ligand>
        <name>substrate</name>
    </ligand>
</feature>
<feature type="binding site" evidence="1">
    <location>
        <position position="79"/>
    </location>
    <ligand>
        <name>Mn(2+)</name>
        <dbReference type="ChEBI" id="CHEBI:29035"/>
        <label>2</label>
    </ligand>
</feature>
<feature type="binding site" evidence="1">
    <location>
        <position position="114"/>
    </location>
    <ligand>
        <name>Mn(2+)</name>
        <dbReference type="ChEBI" id="CHEBI:29035"/>
        <label>2</label>
    </ligand>
</feature>
<feature type="binding site" evidence="1">
    <location>
        <position position="122"/>
    </location>
    <ligand>
        <name>substrate</name>
    </ligand>
</feature>
<feature type="binding site" evidence="1">
    <location>
        <position position="160"/>
    </location>
    <ligand>
        <name>substrate</name>
    </ligand>
</feature>
<feature type="binding site" evidence="1">
    <location>
        <position position="164"/>
    </location>
    <ligand>
        <name>substrate</name>
    </ligand>
</feature>
<feature type="binding site" evidence="1">
    <location>
        <position position="167"/>
    </location>
    <ligand>
        <name>substrate</name>
    </ligand>
</feature>
<feature type="binding site" evidence="1">
    <location>
        <position position="195"/>
    </location>
    <ligand>
        <name>Mn(2+)</name>
        <dbReference type="ChEBI" id="CHEBI:29035"/>
        <label>2</label>
    </ligand>
</feature>
<feature type="binding site" evidence="1">
    <location>
        <position position="195"/>
    </location>
    <ligand>
        <name>substrate</name>
    </ligand>
</feature>
<feature type="binding site" evidence="1">
    <location>
        <position position="197"/>
    </location>
    <ligand>
        <name>Mn(2+)</name>
        <dbReference type="ChEBI" id="CHEBI:29035"/>
        <label>1</label>
    </ligand>
</feature>
<reference key="1">
    <citation type="journal article" date="2006" name="J. Bacteriol.">
        <title>Complete genome sequence of Yersinia pestis strains Antiqua and Nepal516: evidence of gene reduction in an emerging pathogen.</title>
        <authorList>
            <person name="Chain P.S.G."/>
            <person name="Hu P."/>
            <person name="Malfatti S.A."/>
            <person name="Radnedge L."/>
            <person name="Larimer F."/>
            <person name="Vergez L.M."/>
            <person name="Worsham P."/>
            <person name="Chu M.C."/>
            <person name="Andersen G.L."/>
        </authorList>
    </citation>
    <scope>NUCLEOTIDE SEQUENCE [LARGE SCALE GENOMIC DNA]</scope>
    <source>
        <strain>Antiqua</strain>
    </source>
</reference>
<sequence length="240" mass="27444">MSTLFIADLHLSVQEPAITAGFLHFIQREAIHADALYILGDLFESWIGDDDPEPLYRQVAAALKSLQQQGVPCYFIHGNRDFLLGKRFAEESGMVLLPEENVVELYGRKILILHGDTLCTDDTDYQHFRKKVHNPLIQKLFLWIPLRLRLRIAAYMRNKSQQNNSGKSERIMDVNSKAVIDAFLRHDVSWMIHGHTHRPAIHSVELPMVTAHRVVLGAWHVEGSMVKVTADNVELITFPF</sequence>
<comment type="function">
    <text evidence="1">Hydrolyzes the pyrophosphate bond of UDP-2,3-diacylglucosamine to yield 2,3-diacylglucosamine 1-phosphate (lipid X) and UMP by catalyzing the attack of water at the alpha-P atom. Involved in the biosynthesis of lipid A, a phosphorylated glycolipid that anchors the lipopolysaccharide to the outer membrane of the cell.</text>
</comment>
<comment type="catalytic activity">
    <reaction evidence="1">
        <text>UDP-2-N,3-O-bis[(3R)-3-hydroxytetradecanoyl]-alpha-D-glucosamine + H2O = 2-N,3-O-bis[(3R)-3-hydroxytetradecanoyl]-alpha-D-glucosaminyl 1-phosphate + UMP + 2 H(+)</text>
        <dbReference type="Rhea" id="RHEA:25213"/>
        <dbReference type="ChEBI" id="CHEBI:15377"/>
        <dbReference type="ChEBI" id="CHEBI:15378"/>
        <dbReference type="ChEBI" id="CHEBI:57865"/>
        <dbReference type="ChEBI" id="CHEBI:57957"/>
        <dbReference type="ChEBI" id="CHEBI:78847"/>
        <dbReference type="EC" id="3.6.1.54"/>
    </reaction>
</comment>
<comment type="cofactor">
    <cofactor evidence="1">
        <name>Mn(2+)</name>
        <dbReference type="ChEBI" id="CHEBI:29035"/>
    </cofactor>
    <text evidence="1">Binds 2 Mn(2+) ions per subunit in a binuclear metal center.</text>
</comment>
<comment type="pathway">
    <text evidence="1">Glycolipid biosynthesis; lipid IV(A) biosynthesis; lipid IV(A) from (3R)-3-hydroxytetradecanoyl-[acyl-carrier-protein] and UDP-N-acetyl-alpha-D-glucosamine: step 4/6.</text>
</comment>
<comment type="subcellular location">
    <subcellularLocation>
        <location evidence="1">Cell inner membrane</location>
        <topology evidence="1">Peripheral membrane protein</topology>
        <orientation evidence="1">Cytoplasmic side</orientation>
    </subcellularLocation>
</comment>
<comment type="similarity">
    <text evidence="1">Belongs to the LpxH family.</text>
</comment>
<evidence type="ECO:0000255" key="1">
    <source>
        <dbReference type="HAMAP-Rule" id="MF_00575"/>
    </source>
</evidence>
<organism>
    <name type="scientific">Yersinia pestis bv. Antiqua (strain Antiqua)</name>
    <dbReference type="NCBI Taxonomy" id="360102"/>
    <lineage>
        <taxon>Bacteria</taxon>
        <taxon>Pseudomonadati</taxon>
        <taxon>Pseudomonadota</taxon>
        <taxon>Gammaproteobacteria</taxon>
        <taxon>Enterobacterales</taxon>
        <taxon>Yersiniaceae</taxon>
        <taxon>Yersinia</taxon>
    </lineage>
</organism>
<keyword id="KW-0997">Cell inner membrane</keyword>
<keyword id="KW-1003">Cell membrane</keyword>
<keyword id="KW-0378">Hydrolase</keyword>
<keyword id="KW-0441">Lipid A biosynthesis</keyword>
<keyword id="KW-0444">Lipid biosynthesis</keyword>
<keyword id="KW-0443">Lipid metabolism</keyword>
<keyword id="KW-0464">Manganese</keyword>
<keyword id="KW-0472">Membrane</keyword>
<keyword id="KW-0479">Metal-binding</keyword>
<name>LPXH_YERPA</name>
<accession>Q1C4T9</accession>
<proteinExistence type="inferred from homology"/>
<dbReference type="EC" id="3.6.1.54" evidence="1"/>
<dbReference type="EMBL" id="CP000308">
    <property type="protein sequence ID" value="ABG14533.1"/>
    <property type="molecule type" value="Genomic_DNA"/>
</dbReference>
<dbReference type="RefSeq" id="WP_002208568.1">
    <property type="nucleotide sequence ID" value="NZ_CP009906.1"/>
</dbReference>
<dbReference type="SMR" id="Q1C4T9"/>
<dbReference type="KEGG" id="ypa:YPA_2570"/>
<dbReference type="UniPathway" id="UPA00359">
    <property type="reaction ID" value="UER00480"/>
</dbReference>
<dbReference type="Proteomes" id="UP000001971">
    <property type="component" value="Chromosome"/>
</dbReference>
<dbReference type="GO" id="GO:0005737">
    <property type="term" value="C:cytoplasm"/>
    <property type="evidence" value="ECO:0007669"/>
    <property type="project" value="InterPro"/>
</dbReference>
<dbReference type="GO" id="GO:0019897">
    <property type="term" value="C:extrinsic component of plasma membrane"/>
    <property type="evidence" value="ECO:0007669"/>
    <property type="project" value="UniProtKB-UniRule"/>
</dbReference>
<dbReference type="GO" id="GO:0030145">
    <property type="term" value="F:manganese ion binding"/>
    <property type="evidence" value="ECO:0007669"/>
    <property type="project" value="UniProtKB-UniRule"/>
</dbReference>
<dbReference type="GO" id="GO:0008758">
    <property type="term" value="F:UDP-2,3-diacylglucosamine hydrolase activity"/>
    <property type="evidence" value="ECO:0007669"/>
    <property type="project" value="UniProtKB-UniRule"/>
</dbReference>
<dbReference type="GO" id="GO:0009245">
    <property type="term" value="P:lipid A biosynthetic process"/>
    <property type="evidence" value="ECO:0007669"/>
    <property type="project" value="UniProtKB-UniRule"/>
</dbReference>
<dbReference type="CDD" id="cd07398">
    <property type="entry name" value="MPP_YbbF-LpxH"/>
    <property type="match status" value="1"/>
</dbReference>
<dbReference type="FunFam" id="3.60.21.10:FF:000074">
    <property type="entry name" value="UDP-2,3-diacylglucosamine hydrolase"/>
    <property type="match status" value="1"/>
</dbReference>
<dbReference type="Gene3D" id="3.60.21.10">
    <property type="match status" value="1"/>
</dbReference>
<dbReference type="HAMAP" id="MF_00575">
    <property type="entry name" value="LpxH"/>
    <property type="match status" value="1"/>
</dbReference>
<dbReference type="InterPro" id="IPR004843">
    <property type="entry name" value="Calcineurin-like_PHP_ApaH"/>
</dbReference>
<dbReference type="InterPro" id="IPR043461">
    <property type="entry name" value="LpxH-like"/>
</dbReference>
<dbReference type="InterPro" id="IPR029052">
    <property type="entry name" value="Metallo-depent_PP-like"/>
</dbReference>
<dbReference type="InterPro" id="IPR010138">
    <property type="entry name" value="UDP-diacylglucosamine_Hdrlase"/>
</dbReference>
<dbReference type="NCBIfam" id="TIGR01854">
    <property type="entry name" value="lipid_A_lpxH"/>
    <property type="match status" value="1"/>
</dbReference>
<dbReference type="NCBIfam" id="NF003743">
    <property type="entry name" value="PRK05340.1"/>
    <property type="match status" value="1"/>
</dbReference>
<dbReference type="PANTHER" id="PTHR34990:SF1">
    <property type="entry name" value="UDP-2,3-DIACYLGLUCOSAMINE HYDROLASE"/>
    <property type="match status" value="1"/>
</dbReference>
<dbReference type="PANTHER" id="PTHR34990">
    <property type="entry name" value="UDP-2,3-DIACYLGLUCOSAMINE HYDROLASE-RELATED"/>
    <property type="match status" value="1"/>
</dbReference>
<dbReference type="Pfam" id="PF00149">
    <property type="entry name" value="Metallophos"/>
    <property type="match status" value="1"/>
</dbReference>
<dbReference type="SUPFAM" id="SSF56300">
    <property type="entry name" value="Metallo-dependent phosphatases"/>
    <property type="match status" value="1"/>
</dbReference>
<protein>
    <recommendedName>
        <fullName evidence="1">UDP-2,3-diacylglucosamine hydrolase</fullName>
        <ecNumber evidence="1">3.6.1.54</ecNumber>
    </recommendedName>
    <alternativeName>
        <fullName evidence="1">UDP-2,3-diacylglucosamine diphosphatase</fullName>
    </alternativeName>
</protein>
<gene>
    <name evidence="1" type="primary">lpxH</name>
    <name type="ordered locus">YPA_2570</name>
</gene>